<dbReference type="EMBL" id="X54667">
    <property type="protein sequence ID" value="CAA38478.1"/>
    <property type="molecule type" value="mRNA"/>
</dbReference>
<dbReference type="EMBL" id="S51222">
    <property type="protein sequence ID" value="AAB24493.1"/>
    <property type="molecule type" value="Genomic_DNA"/>
</dbReference>
<dbReference type="EMBL" id="S51214">
    <property type="protein sequence ID" value="AAB24493.1"/>
    <property type="status" value="JOINED"/>
    <property type="molecule type" value="Genomic_DNA"/>
</dbReference>
<dbReference type="EMBL" id="S51219">
    <property type="protein sequence ID" value="AAB24493.1"/>
    <property type="status" value="JOINED"/>
    <property type="molecule type" value="Genomic_DNA"/>
</dbReference>
<dbReference type="EMBL" id="AF319565">
    <property type="protein sequence ID" value="AAK11571.1"/>
    <property type="molecule type" value="Genomic_DNA"/>
</dbReference>
<dbReference type="EMBL" id="AL359433">
    <property type="status" value="NOT_ANNOTATED_CDS"/>
    <property type="molecule type" value="Genomic_DNA"/>
</dbReference>
<dbReference type="EMBL" id="BC065714">
    <property type="protein sequence ID" value="AAH65714.1"/>
    <property type="molecule type" value="mRNA"/>
</dbReference>
<dbReference type="EMBL" id="BC074952">
    <property type="protein sequence ID" value="AAH74952.1"/>
    <property type="molecule type" value="mRNA"/>
</dbReference>
<dbReference type="EMBL" id="BC074953">
    <property type="protein sequence ID" value="AAH74953.1"/>
    <property type="molecule type" value="mRNA"/>
</dbReference>
<dbReference type="CCDS" id="CCDS13159.1"/>
<dbReference type="PIR" id="S17667">
    <property type="entry name" value="UDHUP1"/>
</dbReference>
<dbReference type="RefSeq" id="NP_001890.1">
    <property type="nucleotide sequence ID" value="NM_001899.3"/>
</dbReference>
<dbReference type="SMR" id="P01036"/>
<dbReference type="BioGRID" id="107854">
    <property type="interactions" value="111"/>
</dbReference>
<dbReference type="FunCoup" id="P01036">
    <property type="interactions" value="386"/>
</dbReference>
<dbReference type="IntAct" id="P01036">
    <property type="interactions" value="83"/>
</dbReference>
<dbReference type="STRING" id="9606.ENSP00000217423"/>
<dbReference type="MEROPS" id="I25.008"/>
<dbReference type="iPTMnet" id="P01036"/>
<dbReference type="PhosphoSitePlus" id="P01036"/>
<dbReference type="SwissPalm" id="P01036"/>
<dbReference type="BioMuta" id="CST4"/>
<dbReference type="DMDM" id="399336"/>
<dbReference type="jPOST" id="P01036"/>
<dbReference type="MassIVE" id="P01036"/>
<dbReference type="PaxDb" id="9606-ENSP00000217423"/>
<dbReference type="PeptideAtlas" id="P01036"/>
<dbReference type="PRIDE" id="P01036"/>
<dbReference type="ProteomicsDB" id="51312"/>
<dbReference type="TopDownProteomics" id="P01036"/>
<dbReference type="Antibodypedia" id="9816">
    <property type="antibodies" value="341 antibodies from 27 providers"/>
</dbReference>
<dbReference type="DNASU" id="1472"/>
<dbReference type="Ensembl" id="ENST00000217423.4">
    <property type="protein sequence ID" value="ENSP00000217423.3"/>
    <property type="gene ID" value="ENSG00000101441.5"/>
</dbReference>
<dbReference type="GeneID" id="1472"/>
<dbReference type="KEGG" id="hsa:1472"/>
<dbReference type="MANE-Select" id="ENST00000217423.4">
    <property type="protein sequence ID" value="ENSP00000217423.3"/>
    <property type="RefSeq nucleotide sequence ID" value="NM_001899.3"/>
    <property type="RefSeq protein sequence ID" value="NP_001890.1"/>
</dbReference>
<dbReference type="UCSC" id="uc002wto.2">
    <property type="organism name" value="human"/>
</dbReference>
<dbReference type="AGR" id="HGNC:2476"/>
<dbReference type="CTD" id="1472"/>
<dbReference type="DisGeNET" id="1472"/>
<dbReference type="GeneCards" id="CST4"/>
<dbReference type="HGNC" id="HGNC:2476">
    <property type="gene designation" value="CST4"/>
</dbReference>
<dbReference type="HPA" id="ENSG00000101441">
    <property type="expression patterns" value="Tissue enriched (salivary)"/>
</dbReference>
<dbReference type="MIM" id="123857">
    <property type="type" value="gene"/>
</dbReference>
<dbReference type="neXtProt" id="NX_P01036"/>
<dbReference type="OpenTargets" id="ENSG00000101441"/>
<dbReference type="PharmGKB" id="PA26977"/>
<dbReference type="VEuPathDB" id="HostDB:ENSG00000101441"/>
<dbReference type="eggNOG" id="ENOG502SC50">
    <property type="taxonomic scope" value="Eukaryota"/>
</dbReference>
<dbReference type="GeneTree" id="ENSGT00940000163410"/>
<dbReference type="HOGENOM" id="CLU_118168_0_1_1"/>
<dbReference type="InParanoid" id="P01036"/>
<dbReference type="OMA" id="CRKESAN"/>
<dbReference type="OrthoDB" id="9529840at2759"/>
<dbReference type="PAN-GO" id="P01036">
    <property type="GO annotations" value="6 GO annotations based on evolutionary models"/>
</dbReference>
<dbReference type="PhylomeDB" id="P01036"/>
<dbReference type="PathwayCommons" id="P01036"/>
<dbReference type="SignaLink" id="P01036"/>
<dbReference type="BioGRID-ORCS" id="1472">
    <property type="hits" value="20 hits in 1112 CRISPR screens"/>
</dbReference>
<dbReference type="ChiTaRS" id="CST4">
    <property type="organism name" value="human"/>
</dbReference>
<dbReference type="GeneWiki" id="CST4"/>
<dbReference type="GenomeRNAi" id="1472"/>
<dbReference type="Pharos" id="P01036">
    <property type="development level" value="Tbio"/>
</dbReference>
<dbReference type="PRO" id="PR:P01036"/>
<dbReference type="Proteomes" id="UP000005640">
    <property type="component" value="Chromosome 20"/>
</dbReference>
<dbReference type="RNAct" id="P01036">
    <property type="molecule type" value="protein"/>
</dbReference>
<dbReference type="Bgee" id="ENSG00000101441">
    <property type="expression patterns" value="Expressed in parotid gland and 57 other cell types or tissues"/>
</dbReference>
<dbReference type="GO" id="GO:0005737">
    <property type="term" value="C:cytoplasm"/>
    <property type="evidence" value="ECO:0000318"/>
    <property type="project" value="GO_Central"/>
</dbReference>
<dbReference type="GO" id="GO:0070062">
    <property type="term" value="C:extracellular exosome"/>
    <property type="evidence" value="ECO:0007005"/>
    <property type="project" value="UniProtKB"/>
</dbReference>
<dbReference type="GO" id="GO:0005615">
    <property type="term" value="C:extracellular space"/>
    <property type="evidence" value="ECO:0000314"/>
    <property type="project" value="UniProtKB"/>
</dbReference>
<dbReference type="GO" id="GO:0031982">
    <property type="term" value="C:vesicle"/>
    <property type="evidence" value="ECO:0000318"/>
    <property type="project" value="GO_Central"/>
</dbReference>
<dbReference type="GO" id="GO:0004869">
    <property type="term" value="F:cysteine-type endopeptidase inhibitor activity"/>
    <property type="evidence" value="ECO:0000314"/>
    <property type="project" value="UniProtKB"/>
</dbReference>
<dbReference type="GO" id="GO:0001580">
    <property type="term" value="P:detection of chemical stimulus involved in sensory perception of bitter taste"/>
    <property type="evidence" value="ECO:0000314"/>
    <property type="project" value="UniProtKB"/>
</dbReference>
<dbReference type="GO" id="GO:0045861">
    <property type="term" value="P:negative regulation of proteolysis"/>
    <property type="evidence" value="ECO:0000314"/>
    <property type="project" value="UniProtKB"/>
</dbReference>
<dbReference type="CDD" id="cd00042">
    <property type="entry name" value="CY"/>
    <property type="match status" value="1"/>
</dbReference>
<dbReference type="FunFam" id="3.10.450.10:FF:000004">
    <property type="entry name" value="Cystatin C"/>
    <property type="match status" value="1"/>
</dbReference>
<dbReference type="Gene3D" id="3.10.450.10">
    <property type="match status" value="1"/>
</dbReference>
<dbReference type="InterPro" id="IPR000010">
    <property type="entry name" value="Cystatin_dom"/>
</dbReference>
<dbReference type="InterPro" id="IPR046350">
    <property type="entry name" value="Cystatin_sf"/>
</dbReference>
<dbReference type="InterPro" id="IPR018073">
    <property type="entry name" value="Prot_inh_cystat_CS"/>
</dbReference>
<dbReference type="PANTHER" id="PTHR46186">
    <property type="entry name" value="CYSTATIN"/>
    <property type="match status" value="1"/>
</dbReference>
<dbReference type="PANTHER" id="PTHR46186:SF3">
    <property type="entry name" value="CYSTATIN-S-RELATED"/>
    <property type="match status" value="1"/>
</dbReference>
<dbReference type="Pfam" id="PF00031">
    <property type="entry name" value="Cystatin"/>
    <property type="match status" value="1"/>
</dbReference>
<dbReference type="SMART" id="SM00043">
    <property type="entry name" value="CY"/>
    <property type="match status" value="1"/>
</dbReference>
<dbReference type="SUPFAM" id="SSF54403">
    <property type="entry name" value="Cystatin/monellin"/>
    <property type="match status" value="1"/>
</dbReference>
<dbReference type="PROSITE" id="PS00287">
    <property type="entry name" value="CYSTATIN"/>
    <property type="match status" value="1"/>
</dbReference>
<sequence>MARPLCTLLLLMATLAGALASSSKEENRIIPGGIYDADLNDEWVQRALHFAISEYNKATEDEYYRRPLQVLRAREQTFGGVNYFFDVEVGRTICTKSQPNLDTCAFHEQPELQKKQLCSFEIYEVPWEDRMSLVNSRCQEA</sequence>
<reference key="1">
    <citation type="journal article" date="1991" name="Biochem. J.">
        <title>Human salivary cystatin S. Cloning, sequence analysis, hybridization in situ and immunocytochemistry.</title>
        <authorList>
            <person name="Bobek L.A."/>
            <person name="Aguirre A."/>
            <person name="Levine M.J."/>
        </authorList>
    </citation>
    <scope>NUCLEOTIDE SEQUENCE [MRNA]</scope>
    <source>
        <tissue>Submandibular gland</tissue>
    </source>
</reference>
<reference key="2">
    <citation type="journal article" date="1992" name="Agents Actions">
        <title>Characterization of two members (CST4 and CST5) of the cystatin gene family and molecular evolution of cystatin genes.</title>
        <authorList>
            <person name="Saitoh E."/>
            <person name="Isemura S."/>
            <person name="Sanada K."/>
            <person name="Ohnishi K."/>
        </authorList>
    </citation>
    <scope>NUCLEOTIDE SEQUENCE [GENOMIC DNA]</scope>
</reference>
<reference key="3">
    <citation type="submission" date="2000-11" db="EMBL/GenBank/DDBJ databases">
        <title>Acquisition of complex patterns of differential expression in epithelial cell populations during the evolution of type 2 cystatin genes.</title>
        <authorList>
            <person name="Dickinson D.P."/>
            <person name="Hewett-Emmett D."/>
            <person name="Thiesse M."/>
        </authorList>
    </citation>
    <scope>NUCLEOTIDE SEQUENCE [GENOMIC DNA]</scope>
</reference>
<reference key="4">
    <citation type="journal article" date="2001" name="Nature">
        <title>The DNA sequence and comparative analysis of human chromosome 20.</title>
        <authorList>
            <person name="Deloukas P."/>
            <person name="Matthews L.H."/>
            <person name="Ashurst J.L."/>
            <person name="Burton J."/>
            <person name="Gilbert J.G.R."/>
            <person name="Jones M."/>
            <person name="Stavrides G."/>
            <person name="Almeida J.P."/>
            <person name="Babbage A.K."/>
            <person name="Bagguley C.L."/>
            <person name="Bailey J."/>
            <person name="Barlow K.F."/>
            <person name="Bates K.N."/>
            <person name="Beard L.M."/>
            <person name="Beare D.M."/>
            <person name="Beasley O.P."/>
            <person name="Bird C.P."/>
            <person name="Blakey S.E."/>
            <person name="Bridgeman A.M."/>
            <person name="Brown A.J."/>
            <person name="Buck D."/>
            <person name="Burrill W.D."/>
            <person name="Butler A.P."/>
            <person name="Carder C."/>
            <person name="Carter N.P."/>
            <person name="Chapman J.C."/>
            <person name="Clamp M."/>
            <person name="Clark G."/>
            <person name="Clark L.N."/>
            <person name="Clark S.Y."/>
            <person name="Clee C.M."/>
            <person name="Clegg S."/>
            <person name="Cobley V.E."/>
            <person name="Collier R.E."/>
            <person name="Connor R.E."/>
            <person name="Corby N.R."/>
            <person name="Coulson A."/>
            <person name="Coville G.J."/>
            <person name="Deadman R."/>
            <person name="Dhami P.D."/>
            <person name="Dunn M."/>
            <person name="Ellington A.G."/>
            <person name="Frankland J.A."/>
            <person name="Fraser A."/>
            <person name="French L."/>
            <person name="Garner P."/>
            <person name="Grafham D.V."/>
            <person name="Griffiths C."/>
            <person name="Griffiths M.N.D."/>
            <person name="Gwilliam R."/>
            <person name="Hall R.E."/>
            <person name="Hammond S."/>
            <person name="Harley J.L."/>
            <person name="Heath P.D."/>
            <person name="Ho S."/>
            <person name="Holden J.L."/>
            <person name="Howden P.J."/>
            <person name="Huckle E."/>
            <person name="Hunt A.R."/>
            <person name="Hunt S.E."/>
            <person name="Jekosch K."/>
            <person name="Johnson C.M."/>
            <person name="Johnson D."/>
            <person name="Kay M.P."/>
            <person name="Kimberley A.M."/>
            <person name="King A."/>
            <person name="Knights A."/>
            <person name="Laird G.K."/>
            <person name="Lawlor S."/>
            <person name="Lehvaeslaiho M.H."/>
            <person name="Leversha M.A."/>
            <person name="Lloyd C."/>
            <person name="Lloyd D.M."/>
            <person name="Lovell J.D."/>
            <person name="Marsh V.L."/>
            <person name="Martin S.L."/>
            <person name="McConnachie L.J."/>
            <person name="McLay K."/>
            <person name="McMurray A.A."/>
            <person name="Milne S.A."/>
            <person name="Mistry D."/>
            <person name="Moore M.J.F."/>
            <person name="Mullikin J.C."/>
            <person name="Nickerson T."/>
            <person name="Oliver K."/>
            <person name="Parker A."/>
            <person name="Patel R."/>
            <person name="Pearce T.A.V."/>
            <person name="Peck A.I."/>
            <person name="Phillimore B.J.C.T."/>
            <person name="Prathalingam S.R."/>
            <person name="Plumb R.W."/>
            <person name="Ramsay H."/>
            <person name="Rice C.M."/>
            <person name="Ross M.T."/>
            <person name="Scott C.E."/>
            <person name="Sehra H.K."/>
            <person name="Shownkeen R."/>
            <person name="Sims S."/>
            <person name="Skuce C.D."/>
            <person name="Smith M.L."/>
            <person name="Soderlund C."/>
            <person name="Steward C.A."/>
            <person name="Sulston J.E."/>
            <person name="Swann R.M."/>
            <person name="Sycamore N."/>
            <person name="Taylor R."/>
            <person name="Tee L."/>
            <person name="Thomas D.W."/>
            <person name="Thorpe A."/>
            <person name="Tracey A."/>
            <person name="Tromans A.C."/>
            <person name="Vaudin M."/>
            <person name="Wall M."/>
            <person name="Wallis J.M."/>
            <person name="Whitehead S.L."/>
            <person name="Whittaker P."/>
            <person name="Willey D.L."/>
            <person name="Williams L."/>
            <person name="Williams S.A."/>
            <person name="Wilming L."/>
            <person name="Wray P.W."/>
            <person name="Hubbard T."/>
            <person name="Durbin R.M."/>
            <person name="Bentley D.R."/>
            <person name="Beck S."/>
            <person name="Rogers J."/>
        </authorList>
    </citation>
    <scope>NUCLEOTIDE SEQUENCE [LARGE SCALE GENOMIC DNA]</scope>
</reference>
<reference key="5">
    <citation type="journal article" date="2004" name="Genome Res.">
        <title>The status, quality, and expansion of the NIH full-length cDNA project: the Mammalian Gene Collection (MGC).</title>
        <authorList>
            <consortium name="The MGC Project Team"/>
        </authorList>
    </citation>
    <scope>NUCLEOTIDE SEQUENCE [LARGE SCALE MRNA]</scope>
    <source>
        <tissue>Thyroid</tissue>
    </source>
</reference>
<reference key="6">
    <citation type="journal article" date="1987" name="Biochem. Biophys. Res. Commun.">
        <title>Identification of a long form of cystatin from human saliva by rapid microbore HPLC mapping.</title>
        <authorList>
            <person name="Hawke D.H."/>
            <person name="Yuan P.M."/>
            <person name="Wilson K.J."/>
            <person name="Hunkapiller M.W."/>
        </authorList>
    </citation>
    <scope>PROTEIN SEQUENCE OF 21-51</scope>
</reference>
<reference key="7">
    <citation type="journal article" date="1991" name="Biochem. J.">
        <title>Large-scale purification and characterization of the major phosphoproteins and mucins of human submandibular-sublingual saliva.</title>
        <authorList>
            <person name="Ramasubbu N."/>
            <person name="Reddy M.S."/>
            <person name="Bergey E.J."/>
            <person name="Haraszthy G.G."/>
            <person name="Soni S.-D."/>
            <person name="Levine M.J."/>
        </authorList>
    </citation>
    <scope>PROTEIN SEQUENCE OF 21-55</scope>
    <scope>PHOSPHORYLATION AT SER-23</scope>
    <source>
        <tissue>Saliva</tissue>
    </source>
</reference>
<reference key="8">
    <citation type="journal article" date="1991" name="J. Biochem.">
        <title>Identification of full-sized forms of salivary (S-type) cystatins (cystatin SN, cystatin SA, cystatin S, and two phosphorylated forms of cystatin S) in human whole saliva and determination of phosphorylation sites of cystatin S.</title>
        <authorList>
            <person name="Isemura S."/>
            <person name="Saitoh E."/>
            <person name="Sanada K."/>
            <person name="Minakata K."/>
        </authorList>
    </citation>
    <scope>PROTEIN SEQUENCE OF 21-36</scope>
    <scope>PHOSPHORYLATION AT SER-21 AND SER-23</scope>
    <source>
        <tissue>Saliva</tissue>
    </source>
</reference>
<reference key="9">
    <citation type="journal article" date="1991" name="Arch. Oral Biol.">
        <title>The effects of human salivary cystatins and statherin on hydroxyapatite crystallization.</title>
        <authorList>
            <person name="Johnsson M."/>
            <person name="Richardson C.F."/>
            <person name="Bergey E.J."/>
            <person name="Levine M.J."/>
            <person name="Nancollas G.H."/>
        </authorList>
    </citation>
    <scope>PROTEIN SEQUENCE OF 21-36</scope>
    <scope>PHOSPHORYLATION AT SER-23</scope>
    <source>
        <tissue>Saliva</tissue>
    </source>
</reference>
<reference key="10">
    <citation type="journal article" date="1984" name="J. Biochem.">
        <title>Isolation and amino acid sequence of SAP-1, an acidic protein of human whole saliva, and sequence homology with human gamma-trace.</title>
        <authorList>
            <person name="Isemura S."/>
            <person name="Saitoh E."/>
            <person name="Sanada K."/>
        </authorList>
    </citation>
    <scope>PROTEIN SEQUENCE OF 29-141</scope>
</reference>
<reference key="11">
    <citation type="journal article" date="2015" name="J. Proteome Res.">
        <title>Human basal tear peptidome characterization by CID, HCD, and ETD followed by in silico and in vitro analyses for antimicrobial peptide identification.</title>
        <authorList>
            <person name="Azkargorta M."/>
            <person name="Soria J."/>
            <person name="Ojeda C."/>
            <person name="Guzman F."/>
            <person name="Acera A."/>
            <person name="Iloro I."/>
            <person name="Suarez T."/>
            <person name="Elortza F."/>
        </authorList>
    </citation>
    <scope>PROTEIN SEQUENCE OF 85-141</scope>
    <scope>IDENTIFICATION BY MASS SPECTROMETRY</scope>
    <source>
        <tissue>Tear</tissue>
    </source>
</reference>
<reference key="12">
    <citation type="journal article" date="1984" name="J. Biochem.">
        <title>Cystatin S: a cysteine proteinase inhibitor of human saliva.</title>
        <authorList>
            <person name="Isemura S."/>
            <person name="Saitoh E."/>
            <person name="Ito S."/>
            <person name="Isemura M."/>
            <person name="Sanada K."/>
        </authorList>
    </citation>
    <scope>INHIBITOR SPECIFICITY</scope>
</reference>
<reference key="13">
    <citation type="journal article" date="1991" name="Arch. Biochem. Biophys.">
        <title>Salivary cystatin SA-III, a potential precursor of the acquired enamel pellicle, is phosphorylated at both its amino- and carboxyl-terminal regions.</title>
        <authorList>
            <person name="Lamkin M.S."/>
            <person name="Jensen J.L."/>
            <person name="Setayesh M.R."/>
            <person name="Troxler R.F."/>
            <person name="Oppenheim F.G."/>
        </authorList>
    </citation>
    <scope>PHOSPHORYLATION</scope>
</reference>
<reference key="14">
    <citation type="journal article" date="2010" name="J. Am. Soc. Mass Spectrom.">
        <title>Confident assignment of intact mass tags to human salivary cystatins using top-down Fourier-transform ion cyclotron resonance mass spectrometry.</title>
        <authorList>
            <person name="Ryan C.M."/>
            <person name="Souda P."/>
            <person name="Halgand F."/>
            <person name="Wong D.T."/>
            <person name="Loo J.A."/>
            <person name="Faull K.F."/>
            <person name="Whitelegge J.P."/>
        </authorList>
    </citation>
    <scope>PHOSPHORYLATION AT SER-21 AND SER-23</scope>
    <scope>DISULFIDE BONDS</scope>
    <scope>TISSUE SPECIFICITY</scope>
    <scope>SUBCELLULAR LOCATION</scope>
    <scope>MASS SPECTROMETRY</scope>
    <source>
        <tissue>Saliva</tissue>
    </source>
</reference>
<reference key="15">
    <citation type="journal article" date="2006" name="Science">
        <title>The consensus coding sequences of human breast and colorectal cancers.</title>
        <authorList>
            <person name="Sjoeblom T."/>
            <person name="Jones S."/>
            <person name="Wood L.D."/>
            <person name="Parsons D.W."/>
            <person name="Lin J."/>
            <person name="Barber T.D."/>
            <person name="Mandelker D."/>
            <person name="Leary R.J."/>
            <person name="Ptak J."/>
            <person name="Silliman N."/>
            <person name="Szabo S."/>
            <person name="Buckhaults P."/>
            <person name="Farrell C."/>
            <person name="Meeh P."/>
            <person name="Markowitz S.D."/>
            <person name="Willis J."/>
            <person name="Dawson D."/>
            <person name="Willson J.K.V."/>
            <person name="Gazdar A.F."/>
            <person name="Hartigan J."/>
            <person name="Wu L."/>
            <person name="Liu C."/>
            <person name="Parmigiani G."/>
            <person name="Park B.H."/>
            <person name="Bachman K.E."/>
            <person name="Papadopoulos N."/>
            <person name="Vogelstein B."/>
            <person name="Kinzler K.W."/>
            <person name="Velculescu V.E."/>
        </authorList>
    </citation>
    <scope>VARIANT [LARGE SCALE ANALYSIS] ASN-77</scope>
</reference>
<evidence type="ECO:0000250" key="1"/>
<evidence type="ECO:0000269" key="2">
    <source>
    </source>
</evidence>
<evidence type="ECO:0000269" key="3">
    <source>
    </source>
</evidence>
<evidence type="ECO:0000269" key="4">
    <source>
    </source>
</evidence>
<evidence type="ECO:0000269" key="5">
    <source>
    </source>
</evidence>
<evidence type="ECO:0000269" key="6">
    <source>
    </source>
</evidence>
<evidence type="ECO:0000269" key="7">
    <source>
    </source>
</evidence>
<evidence type="ECO:0000269" key="8">
    <source>
    </source>
</evidence>
<evidence type="ECO:0000305" key="9"/>
<accession>P01036</accession>
<accession>Q9UBI5</accession>
<accession>Q9UCS9</accession>
<feature type="signal peptide" evidence="3 4 5 8">
    <location>
        <begin position="1"/>
        <end position="20"/>
    </location>
</feature>
<feature type="chain" id="PRO_0000006650" description="Cystatin-S">
    <location>
        <begin position="21"/>
        <end position="141"/>
    </location>
</feature>
<feature type="short sequence motif" description="Secondary area of contact">
    <location>
        <begin position="76"/>
        <end position="80"/>
    </location>
</feature>
<feature type="site" description="Reactive site">
    <location>
        <position position="32"/>
    </location>
</feature>
<feature type="modified residue" description="Phosphoserine" evidence="5 7">
    <location>
        <position position="21"/>
    </location>
</feature>
<feature type="modified residue" description="Phosphoserine" evidence="3 4 5 7">
    <location>
        <position position="23"/>
    </location>
</feature>
<feature type="disulfide bond" evidence="1">
    <location>
        <begin position="94"/>
        <end position="104"/>
    </location>
</feature>
<feature type="disulfide bond" evidence="1">
    <location>
        <begin position="118"/>
        <end position="138"/>
    </location>
</feature>
<feature type="sequence variant" id="VAR_048852" description="In dbSNP:rs3210291.">
    <original>D</original>
    <variation>N</variation>
    <location>
        <position position="36"/>
    </location>
</feature>
<feature type="sequence variant" id="VAR_036549" description="In a breast cancer sample; somatic mutation." evidence="2">
    <original>T</original>
    <variation>N</variation>
    <location>
        <position position="77"/>
    </location>
</feature>
<feature type="sequence conflict" description="In Ref. 10; AA sequence." evidence="9" ref="10">
    <original>N</original>
    <variation>D</variation>
    <location>
        <position position="135"/>
    </location>
</feature>
<comment type="function">
    <text>This protein strongly inhibits papain and ficin, partially inhibits stem bromelain and bovine cathepsin C, but does not inhibit porcine cathepsin B or clostripain. Papain is inhibited non-competitively.</text>
</comment>
<comment type="interaction">
    <interactant intactId="EBI-1049999">
        <id>P01036</id>
    </interactant>
    <interactant intactId="EBI-947187">
        <id>Q9UHD9</id>
        <label>UBQLN2</label>
    </interactant>
    <organismsDiffer>false</organismsDiffer>
    <experiments>3</experiments>
</comment>
<comment type="subcellular location">
    <subcellularLocation>
        <location evidence="7">Secreted</location>
    </subcellularLocation>
</comment>
<comment type="tissue specificity">
    <text evidence="7">Expressed in submandibular and sublingual saliva but not in parotid saliva (at protein level). Expressed in saliva, tears, urine and seminal fluid.</text>
</comment>
<comment type="PTM">
    <text evidence="3 4 5 6 7">Phosphorylated at both its N- and C-terminal regions.</text>
</comment>
<comment type="mass spectrometry"/>
<comment type="mass spectrometry">
    <text>Monophosphorylated at Ser-23, also called form S1.</text>
</comment>
<comment type="mass spectrometry">
    <text>Diphosphorylated at Ser-21 and Ser-23, also called form S2.</text>
</comment>
<comment type="similarity">
    <text evidence="9">Belongs to the cystatin family.</text>
</comment>
<proteinExistence type="evidence at protein level"/>
<gene>
    <name type="primary">CST4</name>
</gene>
<organism>
    <name type="scientific">Homo sapiens</name>
    <name type="common">Human</name>
    <dbReference type="NCBI Taxonomy" id="9606"/>
    <lineage>
        <taxon>Eukaryota</taxon>
        <taxon>Metazoa</taxon>
        <taxon>Chordata</taxon>
        <taxon>Craniata</taxon>
        <taxon>Vertebrata</taxon>
        <taxon>Euteleostomi</taxon>
        <taxon>Mammalia</taxon>
        <taxon>Eutheria</taxon>
        <taxon>Euarchontoglires</taxon>
        <taxon>Primates</taxon>
        <taxon>Haplorrhini</taxon>
        <taxon>Catarrhini</taxon>
        <taxon>Hominidae</taxon>
        <taxon>Homo</taxon>
    </lineage>
</organism>
<keyword id="KW-0903">Direct protein sequencing</keyword>
<keyword id="KW-1015">Disulfide bond</keyword>
<keyword id="KW-0597">Phosphoprotein</keyword>
<keyword id="KW-0646">Protease inhibitor</keyword>
<keyword id="KW-1267">Proteomics identification</keyword>
<keyword id="KW-1185">Reference proteome</keyword>
<keyword id="KW-0964">Secreted</keyword>
<keyword id="KW-0732">Signal</keyword>
<keyword id="KW-0789">Thiol protease inhibitor</keyword>
<protein>
    <recommendedName>
        <fullName>Cystatin-S</fullName>
    </recommendedName>
    <alternativeName>
        <fullName>Cystatin-4</fullName>
    </alternativeName>
    <alternativeName>
        <fullName>Cystatin-SA-III</fullName>
    </alternativeName>
    <alternativeName>
        <fullName>Salivary acidic protein 1</fullName>
    </alternativeName>
</protein>
<name>CYTS_HUMAN</name>